<comment type="similarity">
    <text evidence="1">Belongs to the UPF0435 family.</text>
</comment>
<organism>
    <name type="scientific">Staphylococcus aureus (strain COL)</name>
    <dbReference type="NCBI Taxonomy" id="93062"/>
    <lineage>
        <taxon>Bacteria</taxon>
        <taxon>Bacillati</taxon>
        <taxon>Bacillota</taxon>
        <taxon>Bacilli</taxon>
        <taxon>Bacillales</taxon>
        <taxon>Staphylococcaceae</taxon>
        <taxon>Staphylococcus</taxon>
    </lineage>
</organism>
<reference key="1">
    <citation type="journal article" date="2005" name="J. Bacteriol.">
        <title>Insights on evolution of virulence and resistance from the complete genome analysis of an early methicillin-resistant Staphylococcus aureus strain and a biofilm-producing methicillin-resistant Staphylococcus epidermidis strain.</title>
        <authorList>
            <person name="Gill S.R."/>
            <person name="Fouts D.E."/>
            <person name="Archer G.L."/>
            <person name="Mongodin E.F."/>
            <person name="DeBoy R.T."/>
            <person name="Ravel J."/>
            <person name="Paulsen I.T."/>
            <person name="Kolonay J.F."/>
            <person name="Brinkac L.M."/>
            <person name="Beanan M.J."/>
            <person name="Dodson R.J."/>
            <person name="Daugherty S.C."/>
            <person name="Madupu R."/>
            <person name="Angiuoli S.V."/>
            <person name="Durkin A.S."/>
            <person name="Haft D.H."/>
            <person name="Vamathevan J.J."/>
            <person name="Khouri H."/>
            <person name="Utterback T.R."/>
            <person name="Lee C."/>
            <person name="Dimitrov G."/>
            <person name="Jiang L."/>
            <person name="Qin H."/>
            <person name="Weidman J."/>
            <person name="Tran K."/>
            <person name="Kang K.H."/>
            <person name="Hance I.R."/>
            <person name="Nelson K.E."/>
            <person name="Fraser C.M."/>
        </authorList>
    </citation>
    <scope>NUCLEOTIDE SEQUENCE [LARGE SCALE GENOMIC DNA]</scope>
    <source>
        <strain>COL</strain>
    </source>
</reference>
<gene>
    <name type="ordered locus">SACOL1938</name>
</gene>
<dbReference type="EMBL" id="CP000046">
    <property type="protein sequence ID" value="AAW38379.1"/>
    <property type="molecule type" value="Genomic_DNA"/>
</dbReference>
<dbReference type="SMR" id="Q5HEP4"/>
<dbReference type="KEGG" id="sac:SACOL1938"/>
<dbReference type="HOGENOM" id="CLU_199533_0_0_9"/>
<dbReference type="Proteomes" id="UP000000530">
    <property type="component" value="Chromosome"/>
</dbReference>
<dbReference type="HAMAP" id="MF_00829">
    <property type="entry name" value="UPF0435"/>
    <property type="match status" value="1"/>
</dbReference>
<dbReference type="InterPro" id="IPR009507">
    <property type="entry name" value="UPF0435"/>
</dbReference>
<dbReference type="Pfam" id="PF06569">
    <property type="entry name" value="DUF1128"/>
    <property type="match status" value="1"/>
</dbReference>
<accession>Q5HEP4</accession>
<feature type="chain" id="PRO_0000291416" description="UPF0435 protein SACOL1938">
    <location>
        <begin position="1"/>
        <end position="68"/>
    </location>
</feature>
<evidence type="ECO:0000255" key="1">
    <source>
        <dbReference type="HAMAP-Rule" id="MF_00829"/>
    </source>
</evidence>
<protein>
    <recommendedName>
        <fullName evidence="1">UPF0435 protein SACOL1938</fullName>
    </recommendedName>
</protein>
<proteinExistence type="inferred from homology"/>
<name>Y1938_STAAC</name>
<sequence>MAMTNEEKVLAIREKLNIVNQGLLDPEKYKNANEEELTDIYDFVQSRERLSPSEVTAIADALGQLRHE</sequence>